<proteinExistence type="inferred from homology"/>
<reference key="1">
    <citation type="journal article" date="2005" name="Nucleic Acids Res.">
        <title>The genome sequence of Xanthomonas oryzae pathovar oryzae KACC10331, the bacterial blight pathogen of rice.</title>
        <authorList>
            <person name="Lee B.-M."/>
            <person name="Park Y.-J."/>
            <person name="Park D.-S."/>
            <person name="Kang H.-W."/>
            <person name="Kim J.-G."/>
            <person name="Song E.-S."/>
            <person name="Park I.-C."/>
            <person name="Yoon U.-H."/>
            <person name="Hahn J.-H."/>
            <person name="Koo B.-S."/>
            <person name="Lee G.-B."/>
            <person name="Kim H."/>
            <person name="Park H.-S."/>
            <person name="Yoon K.-O."/>
            <person name="Kim J.-H."/>
            <person name="Jung C.-H."/>
            <person name="Koh N.-H."/>
            <person name="Seo J.-S."/>
            <person name="Go S.-J."/>
        </authorList>
    </citation>
    <scope>NUCLEOTIDE SEQUENCE [LARGE SCALE GENOMIC DNA]</scope>
    <source>
        <strain>KACC10331 / KXO85</strain>
    </source>
</reference>
<comment type="function">
    <text evidence="1">Located at the top of the head of the 30S subunit, it contacts several helices of the 16S rRNA. In the 70S ribosome it contacts the 23S rRNA (bridge B1a) and protein L5 of the 50S subunit (bridge B1b), connecting the 2 subunits; these bridges are implicated in subunit movement. Contacts the tRNAs in the A and P-sites.</text>
</comment>
<comment type="subunit">
    <text evidence="1">Part of the 30S ribosomal subunit. Forms a loose heterodimer with protein S19. Forms two bridges to the 50S subunit in the 70S ribosome.</text>
</comment>
<comment type="similarity">
    <text evidence="1">Belongs to the universal ribosomal protein uS13 family.</text>
</comment>
<comment type="sequence caution" evidence="3">
    <conflict type="erroneous initiation">
        <sequence resource="EMBL-CDS" id="AAW76815"/>
    </conflict>
</comment>
<protein>
    <recommendedName>
        <fullName evidence="1">Small ribosomal subunit protein uS13</fullName>
    </recommendedName>
    <alternativeName>
        <fullName evidence="3">30S ribosomal protein S13</fullName>
    </alternativeName>
</protein>
<accession>Q5GWV6</accession>
<organism>
    <name type="scientific">Xanthomonas oryzae pv. oryzae (strain KACC10331 / KXO85)</name>
    <dbReference type="NCBI Taxonomy" id="291331"/>
    <lineage>
        <taxon>Bacteria</taxon>
        <taxon>Pseudomonadati</taxon>
        <taxon>Pseudomonadota</taxon>
        <taxon>Gammaproteobacteria</taxon>
        <taxon>Lysobacterales</taxon>
        <taxon>Lysobacteraceae</taxon>
        <taxon>Xanthomonas</taxon>
    </lineage>
</organism>
<dbReference type="EMBL" id="AE013598">
    <property type="protein sequence ID" value="AAW76815.1"/>
    <property type="status" value="ALT_INIT"/>
    <property type="molecule type" value="Genomic_DNA"/>
</dbReference>
<dbReference type="SMR" id="Q5GWV6"/>
<dbReference type="STRING" id="291331.XOO3561"/>
<dbReference type="KEGG" id="xoo:XOO3561"/>
<dbReference type="HOGENOM" id="CLU_103849_1_2_6"/>
<dbReference type="Proteomes" id="UP000006735">
    <property type="component" value="Chromosome"/>
</dbReference>
<dbReference type="GO" id="GO:0005829">
    <property type="term" value="C:cytosol"/>
    <property type="evidence" value="ECO:0007669"/>
    <property type="project" value="TreeGrafter"/>
</dbReference>
<dbReference type="GO" id="GO:0015935">
    <property type="term" value="C:small ribosomal subunit"/>
    <property type="evidence" value="ECO:0007669"/>
    <property type="project" value="TreeGrafter"/>
</dbReference>
<dbReference type="GO" id="GO:0019843">
    <property type="term" value="F:rRNA binding"/>
    <property type="evidence" value="ECO:0007669"/>
    <property type="project" value="UniProtKB-UniRule"/>
</dbReference>
<dbReference type="GO" id="GO:0003735">
    <property type="term" value="F:structural constituent of ribosome"/>
    <property type="evidence" value="ECO:0007669"/>
    <property type="project" value="InterPro"/>
</dbReference>
<dbReference type="GO" id="GO:0000049">
    <property type="term" value="F:tRNA binding"/>
    <property type="evidence" value="ECO:0007669"/>
    <property type="project" value="UniProtKB-UniRule"/>
</dbReference>
<dbReference type="GO" id="GO:0006412">
    <property type="term" value="P:translation"/>
    <property type="evidence" value="ECO:0007669"/>
    <property type="project" value="UniProtKB-UniRule"/>
</dbReference>
<dbReference type="FunFam" id="1.10.8.50:FF:000001">
    <property type="entry name" value="30S ribosomal protein S13"/>
    <property type="match status" value="1"/>
</dbReference>
<dbReference type="FunFam" id="4.10.910.10:FF:000001">
    <property type="entry name" value="30S ribosomal protein S13"/>
    <property type="match status" value="1"/>
</dbReference>
<dbReference type="Gene3D" id="1.10.8.50">
    <property type="match status" value="1"/>
</dbReference>
<dbReference type="Gene3D" id="4.10.910.10">
    <property type="entry name" value="30s ribosomal protein s13, domain 2"/>
    <property type="match status" value="1"/>
</dbReference>
<dbReference type="HAMAP" id="MF_01315">
    <property type="entry name" value="Ribosomal_uS13"/>
    <property type="match status" value="1"/>
</dbReference>
<dbReference type="InterPro" id="IPR027437">
    <property type="entry name" value="Rbsml_uS13_C"/>
</dbReference>
<dbReference type="InterPro" id="IPR001892">
    <property type="entry name" value="Ribosomal_uS13"/>
</dbReference>
<dbReference type="InterPro" id="IPR010979">
    <property type="entry name" value="Ribosomal_uS13-like_H2TH"/>
</dbReference>
<dbReference type="InterPro" id="IPR019980">
    <property type="entry name" value="Ribosomal_uS13_bac-type"/>
</dbReference>
<dbReference type="InterPro" id="IPR018269">
    <property type="entry name" value="Ribosomal_uS13_CS"/>
</dbReference>
<dbReference type="NCBIfam" id="TIGR03631">
    <property type="entry name" value="uS13_bact"/>
    <property type="match status" value="1"/>
</dbReference>
<dbReference type="PANTHER" id="PTHR10871">
    <property type="entry name" value="30S RIBOSOMAL PROTEIN S13/40S RIBOSOMAL PROTEIN S18"/>
    <property type="match status" value="1"/>
</dbReference>
<dbReference type="PANTHER" id="PTHR10871:SF1">
    <property type="entry name" value="SMALL RIBOSOMAL SUBUNIT PROTEIN US13M"/>
    <property type="match status" value="1"/>
</dbReference>
<dbReference type="Pfam" id="PF00416">
    <property type="entry name" value="Ribosomal_S13"/>
    <property type="match status" value="1"/>
</dbReference>
<dbReference type="PIRSF" id="PIRSF002134">
    <property type="entry name" value="Ribosomal_S13"/>
    <property type="match status" value="1"/>
</dbReference>
<dbReference type="SUPFAM" id="SSF46946">
    <property type="entry name" value="S13-like H2TH domain"/>
    <property type="match status" value="1"/>
</dbReference>
<dbReference type="PROSITE" id="PS00646">
    <property type="entry name" value="RIBOSOMAL_S13_1"/>
    <property type="match status" value="1"/>
</dbReference>
<dbReference type="PROSITE" id="PS50159">
    <property type="entry name" value="RIBOSOMAL_S13_2"/>
    <property type="match status" value="1"/>
</dbReference>
<sequence>MARIAGVNLPAQKHVWVGLQSIYGIGRTRSKKLCESAGVTSTTKIRDLSEPEIERLRAEVGKYVVEGDLRREIGIAIKRLMDLGCYRGLRHRRGLPLRGQRTRTNARTRKGPRKAIRK</sequence>
<gene>
    <name evidence="1" type="primary">rpsM</name>
    <name type="ordered locus">XOO3561</name>
</gene>
<feature type="chain" id="PRO_0000230583" description="Small ribosomal subunit protein uS13">
    <location>
        <begin position="1"/>
        <end position="118"/>
    </location>
</feature>
<feature type="region of interest" description="Disordered" evidence="2">
    <location>
        <begin position="94"/>
        <end position="118"/>
    </location>
</feature>
<evidence type="ECO:0000255" key="1">
    <source>
        <dbReference type="HAMAP-Rule" id="MF_01315"/>
    </source>
</evidence>
<evidence type="ECO:0000256" key="2">
    <source>
        <dbReference type="SAM" id="MobiDB-lite"/>
    </source>
</evidence>
<evidence type="ECO:0000305" key="3"/>
<name>RS13_XANOR</name>
<keyword id="KW-1185">Reference proteome</keyword>
<keyword id="KW-0687">Ribonucleoprotein</keyword>
<keyword id="KW-0689">Ribosomal protein</keyword>
<keyword id="KW-0694">RNA-binding</keyword>
<keyword id="KW-0699">rRNA-binding</keyword>
<keyword id="KW-0820">tRNA-binding</keyword>